<proteinExistence type="evidence at protein level"/>
<comment type="catalytic activity">
    <reaction>
        <text>Thiol-dependent hydrolysis of ester, thioester, amide, peptide and isopeptide bonds formed by the C-terminal Gly of ubiquitin (a 76-residue protein attached to proteins as an intracellular targeting signal).</text>
        <dbReference type="EC" id="3.4.19.12"/>
    </reaction>
</comment>
<comment type="miscellaneous">
    <text evidence="4">Present with 98 molecules/cell in log phase SD medium.</text>
</comment>
<comment type="similarity">
    <text evidence="5">Belongs to the peptidase C19 family.</text>
</comment>
<name>UBP9_YEAST</name>
<protein>
    <recommendedName>
        <fullName>Ubiquitin carboxyl-terminal hydrolase 9</fullName>
        <ecNumber>3.4.19.12</ecNumber>
    </recommendedName>
    <alternativeName>
        <fullName>Deubiquitinating enzyme 9</fullName>
    </alternativeName>
    <alternativeName>
        <fullName>Ubiquitin thioesterase 9</fullName>
    </alternativeName>
    <alternativeName>
        <fullName>Ubiquitin-specific-processing protease 9</fullName>
    </alternativeName>
</protein>
<sequence>MIKRWLSVNRKKSHPEKNTQGNDEINRKATSLKKTKGSGDPSIAKSPSAKSSTSSIPSNLASHERRSKFSSQTDNLAGNKHYHEHYHNMASTSDEREYDSSTTYEDRAFDTESSILFTTITDLMPYGDGSNKVFGYENFGNTCYCNSVLQCLYNIPEFRCNVLRYPERVAAVNRIRKSDLKGSKIRVFTNESFETSTNSGNSNTGYQSNDNEDAHNHHHLQQSDQDNSSSSTQEKQNNFERKRNSFMGFGKDKSNYKDSAKKDDNNEMERPQPVHTVVMASDTLTEKLHEGCKKIIVGRPLLKQSDSLSKASTTDCQANSHCQCDSQGSRITSVDDDVLVNPESCNDAVNNSNNNKENTFPTSEQRKKAALIRGPVLNVDHLLYPTEEATLYNGLKDIFESITENLSLTGIVSPTEFVKILKKENVLFNTMMQQDAHEFLNFLLNDFSEYIQRNNPRMRFGPQKTDNSNDNFITDLFKGTLTNRIKCLTCDNITSRDEPFLDFPIEVQGDEETDIQKMLKSYHQREMLNGVNKFYCNKCYGLQEAERMVGLKQLPHILSLHLKRFKYSEEQKSNIKLFNKILYPLTLDVSSTFNTSVYKKYELSGVVIHMGSGPQHGHYVCICRNEKFGWLLYDDETVESIKEETVLQFTGHPGDQTTAYVLFYKETQADKTENQNENIDTSSQDQMQTDNNIEQLIKCDDWLRDRKLRAAANIERKKTLGNIPEVKTAETKTPLNDKKRNKQKRKSRILSFIK</sequence>
<reference key="1">
    <citation type="journal article" date="1997" name="Nature">
        <title>The nucleotide sequence of Saccharomyces cerevisiae chromosome V.</title>
        <authorList>
            <person name="Dietrich F.S."/>
            <person name="Mulligan J.T."/>
            <person name="Hennessy K.M."/>
            <person name="Yelton M.A."/>
            <person name="Allen E."/>
            <person name="Araujo R."/>
            <person name="Aviles E."/>
            <person name="Berno A."/>
            <person name="Brennan T."/>
            <person name="Carpenter J."/>
            <person name="Chen E."/>
            <person name="Cherry J.M."/>
            <person name="Chung E."/>
            <person name="Duncan M."/>
            <person name="Guzman E."/>
            <person name="Hartzell G."/>
            <person name="Hunicke-Smith S."/>
            <person name="Hyman R.W."/>
            <person name="Kayser A."/>
            <person name="Komp C."/>
            <person name="Lashkari D."/>
            <person name="Lew H."/>
            <person name="Lin D."/>
            <person name="Mosedale D."/>
            <person name="Nakahara K."/>
            <person name="Namath A."/>
            <person name="Norgren R."/>
            <person name="Oefner P."/>
            <person name="Oh C."/>
            <person name="Petel F.X."/>
            <person name="Roberts D."/>
            <person name="Sehl P."/>
            <person name="Schramm S."/>
            <person name="Shogren T."/>
            <person name="Smith V."/>
            <person name="Taylor P."/>
            <person name="Wei Y."/>
            <person name="Botstein D."/>
            <person name="Davis R.W."/>
        </authorList>
    </citation>
    <scope>NUCLEOTIDE SEQUENCE [LARGE SCALE GENOMIC DNA]</scope>
    <source>
        <strain>ATCC 204508 / S288c</strain>
    </source>
</reference>
<reference key="2">
    <citation type="journal article" date="2014" name="G3 (Bethesda)">
        <title>The reference genome sequence of Saccharomyces cerevisiae: Then and now.</title>
        <authorList>
            <person name="Engel S.R."/>
            <person name="Dietrich F.S."/>
            <person name="Fisk D.G."/>
            <person name="Binkley G."/>
            <person name="Balakrishnan R."/>
            <person name="Costanzo M.C."/>
            <person name="Dwight S.S."/>
            <person name="Hitz B.C."/>
            <person name="Karra K."/>
            <person name="Nash R.S."/>
            <person name="Weng S."/>
            <person name="Wong E.D."/>
            <person name="Lloyd P."/>
            <person name="Skrzypek M.S."/>
            <person name="Miyasato S.R."/>
            <person name="Simison M."/>
            <person name="Cherry J.M."/>
        </authorList>
    </citation>
    <scope>GENOME REANNOTATION</scope>
    <source>
        <strain>ATCC 204508 / S288c</strain>
    </source>
</reference>
<reference key="3">
    <citation type="journal article" date="2003" name="Nature">
        <title>Global analysis of protein expression in yeast.</title>
        <authorList>
            <person name="Ghaemmaghami S."/>
            <person name="Huh W.-K."/>
            <person name="Bower K."/>
            <person name="Howson R.W."/>
            <person name="Belle A."/>
            <person name="Dephoure N."/>
            <person name="O'Shea E.K."/>
            <person name="Weissman J.S."/>
        </authorList>
    </citation>
    <scope>LEVEL OF PROTEIN EXPRESSION [LARGE SCALE ANALYSIS]</scope>
</reference>
<accession>P39967</accession>
<accession>D3DM05</accession>
<feature type="chain" id="PRO_0000080594" description="Ubiquitin carboxyl-terminal hydrolase 9">
    <location>
        <begin position="1"/>
        <end position="754"/>
    </location>
</feature>
<feature type="domain" description="USP">
    <location>
        <begin position="134"/>
        <end position="667"/>
    </location>
</feature>
<feature type="region of interest" description="Disordered" evidence="3">
    <location>
        <begin position="1"/>
        <end position="76"/>
    </location>
</feature>
<feature type="region of interest" description="Disordered" evidence="3">
    <location>
        <begin position="194"/>
        <end position="273"/>
    </location>
</feature>
<feature type="region of interest" description="Disordered" evidence="3">
    <location>
        <begin position="726"/>
        <end position="754"/>
    </location>
</feature>
<feature type="compositionally biased region" description="Basic residues" evidence="3">
    <location>
        <begin position="1"/>
        <end position="14"/>
    </location>
</feature>
<feature type="compositionally biased region" description="Low complexity" evidence="3">
    <location>
        <begin position="42"/>
        <end position="58"/>
    </location>
</feature>
<feature type="compositionally biased region" description="Polar residues" evidence="3">
    <location>
        <begin position="194"/>
        <end position="209"/>
    </location>
</feature>
<feature type="compositionally biased region" description="Low complexity" evidence="3">
    <location>
        <begin position="222"/>
        <end position="233"/>
    </location>
</feature>
<feature type="compositionally biased region" description="Basic and acidic residues" evidence="3">
    <location>
        <begin position="250"/>
        <end position="272"/>
    </location>
</feature>
<feature type="compositionally biased region" description="Basic and acidic residues" evidence="3">
    <location>
        <begin position="727"/>
        <end position="738"/>
    </location>
</feature>
<feature type="compositionally biased region" description="Basic residues" evidence="3">
    <location>
        <begin position="739"/>
        <end position="748"/>
    </location>
</feature>
<feature type="active site" description="Nucleophile" evidence="1 2">
    <location>
        <position position="143"/>
    </location>
</feature>
<feature type="active site" description="Proton acceptor" evidence="1 2">
    <location>
        <position position="618"/>
    </location>
</feature>
<keyword id="KW-0378">Hydrolase</keyword>
<keyword id="KW-0645">Protease</keyword>
<keyword id="KW-1185">Reference proteome</keyword>
<keyword id="KW-0788">Thiol protease</keyword>
<keyword id="KW-0833">Ubl conjugation pathway</keyword>
<evidence type="ECO:0000255" key="1">
    <source>
        <dbReference type="PROSITE-ProRule" id="PRU10092"/>
    </source>
</evidence>
<evidence type="ECO:0000255" key="2">
    <source>
        <dbReference type="PROSITE-ProRule" id="PRU10093"/>
    </source>
</evidence>
<evidence type="ECO:0000256" key="3">
    <source>
        <dbReference type="SAM" id="MobiDB-lite"/>
    </source>
</evidence>
<evidence type="ECO:0000269" key="4">
    <source>
    </source>
</evidence>
<evidence type="ECO:0000305" key="5"/>
<dbReference type="EC" id="3.4.19.12"/>
<dbReference type="EMBL" id="U18839">
    <property type="protein sequence ID" value="AAB64653.1"/>
    <property type="molecule type" value="Genomic_DNA"/>
</dbReference>
<dbReference type="EMBL" id="BK006939">
    <property type="protein sequence ID" value="DAA07759.1"/>
    <property type="molecule type" value="Genomic_DNA"/>
</dbReference>
<dbReference type="PIR" id="S50601">
    <property type="entry name" value="S50601"/>
</dbReference>
<dbReference type="RefSeq" id="NP_011024.1">
    <property type="nucleotide sequence ID" value="NM_001178989.1"/>
</dbReference>
<dbReference type="SMR" id="P39967"/>
<dbReference type="BioGRID" id="36844">
    <property type="interactions" value="125"/>
</dbReference>
<dbReference type="DIP" id="DIP-6551N"/>
<dbReference type="FunCoup" id="P39967">
    <property type="interactions" value="337"/>
</dbReference>
<dbReference type="IntAct" id="P39967">
    <property type="interactions" value="13"/>
</dbReference>
<dbReference type="MINT" id="P39967"/>
<dbReference type="STRING" id="4932.YER098W"/>
<dbReference type="MEROPS" id="C19.A20"/>
<dbReference type="iPTMnet" id="P39967"/>
<dbReference type="PaxDb" id="4932-YER098W"/>
<dbReference type="PeptideAtlas" id="P39967"/>
<dbReference type="EnsemblFungi" id="YER098W_mRNA">
    <property type="protein sequence ID" value="YER098W"/>
    <property type="gene ID" value="YER098W"/>
</dbReference>
<dbReference type="GeneID" id="856835"/>
<dbReference type="KEGG" id="sce:YER098W"/>
<dbReference type="AGR" id="SGD:S000000900"/>
<dbReference type="SGD" id="S000000900">
    <property type="gene designation" value="UBP9"/>
</dbReference>
<dbReference type="VEuPathDB" id="FungiDB:YER098W"/>
<dbReference type="eggNOG" id="KOG1864">
    <property type="taxonomic scope" value="Eukaryota"/>
</dbReference>
<dbReference type="GeneTree" id="ENSGT00940000176606"/>
<dbReference type="HOGENOM" id="CLU_008279_12_1_1"/>
<dbReference type="InParanoid" id="P39967"/>
<dbReference type="OMA" id="PMHGHYV"/>
<dbReference type="OrthoDB" id="27652at2759"/>
<dbReference type="BioCyc" id="YEAST:G3O-30264-MONOMER"/>
<dbReference type="BioGRID-ORCS" id="856835">
    <property type="hits" value="0 hits in 10 CRISPR screens"/>
</dbReference>
<dbReference type="PRO" id="PR:P39967"/>
<dbReference type="Proteomes" id="UP000002311">
    <property type="component" value="Chromosome V"/>
</dbReference>
<dbReference type="RNAct" id="P39967">
    <property type="molecule type" value="protein"/>
</dbReference>
<dbReference type="GO" id="GO:0005737">
    <property type="term" value="C:cytoplasm"/>
    <property type="evidence" value="ECO:0007005"/>
    <property type="project" value="SGD"/>
</dbReference>
<dbReference type="GO" id="GO:0005829">
    <property type="term" value="C:cytosol"/>
    <property type="evidence" value="ECO:0000318"/>
    <property type="project" value="GO_Central"/>
</dbReference>
<dbReference type="GO" id="GO:0005634">
    <property type="term" value="C:nucleus"/>
    <property type="evidence" value="ECO:0000318"/>
    <property type="project" value="GO_Central"/>
</dbReference>
<dbReference type="GO" id="GO:0004843">
    <property type="term" value="F:cysteine-type deubiquitinase activity"/>
    <property type="evidence" value="ECO:0000318"/>
    <property type="project" value="GO_Central"/>
</dbReference>
<dbReference type="GO" id="GO:0016579">
    <property type="term" value="P:protein deubiquitination"/>
    <property type="evidence" value="ECO:0000304"/>
    <property type="project" value="SGD"/>
</dbReference>
<dbReference type="GO" id="GO:0006508">
    <property type="term" value="P:proteolysis"/>
    <property type="evidence" value="ECO:0007669"/>
    <property type="project" value="UniProtKB-KW"/>
</dbReference>
<dbReference type="GO" id="GO:0031647">
    <property type="term" value="P:regulation of protein stability"/>
    <property type="evidence" value="ECO:0000318"/>
    <property type="project" value="GO_Central"/>
</dbReference>
<dbReference type="FunFam" id="3.90.70.10:FF:000131">
    <property type="entry name" value="Ubiquitin carboxyl-terminal hydrolase"/>
    <property type="match status" value="1"/>
</dbReference>
<dbReference type="Gene3D" id="3.90.70.10">
    <property type="entry name" value="Cysteine proteinases"/>
    <property type="match status" value="2"/>
</dbReference>
<dbReference type="InterPro" id="IPR038765">
    <property type="entry name" value="Papain-like_cys_pep_sf"/>
</dbReference>
<dbReference type="InterPro" id="IPR050164">
    <property type="entry name" value="Peptidase_C19"/>
</dbReference>
<dbReference type="InterPro" id="IPR001394">
    <property type="entry name" value="Peptidase_C19_UCH"/>
</dbReference>
<dbReference type="InterPro" id="IPR018200">
    <property type="entry name" value="USP_CS"/>
</dbReference>
<dbReference type="InterPro" id="IPR028889">
    <property type="entry name" value="USP_dom"/>
</dbReference>
<dbReference type="PANTHER" id="PTHR24006:SF733">
    <property type="entry name" value="RE52890P"/>
    <property type="match status" value="1"/>
</dbReference>
<dbReference type="PANTHER" id="PTHR24006">
    <property type="entry name" value="UBIQUITIN CARBOXYL-TERMINAL HYDROLASE"/>
    <property type="match status" value="1"/>
</dbReference>
<dbReference type="Pfam" id="PF00443">
    <property type="entry name" value="UCH"/>
    <property type="match status" value="1"/>
</dbReference>
<dbReference type="SUPFAM" id="SSF54001">
    <property type="entry name" value="Cysteine proteinases"/>
    <property type="match status" value="1"/>
</dbReference>
<dbReference type="PROSITE" id="PS00972">
    <property type="entry name" value="USP_1"/>
    <property type="match status" value="1"/>
</dbReference>
<dbReference type="PROSITE" id="PS00973">
    <property type="entry name" value="USP_2"/>
    <property type="match status" value="1"/>
</dbReference>
<dbReference type="PROSITE" id="PS50235">
    <property type="entry name" value="USP_3"/>
    <property type="match status" value="1"/>
</dbReference>
<organism>
    <name type="scientific">Saccharomyces cerevisiae (strain ATCC 204508 / S288c)</name>
    <name type="common">Baker's yeast</name>
    <dbReference type="NCBI Taxonomy" id="559292"/>
    <lineage>
        <taxon>Eukaryota</taxon>
        <taxon>Fungi</taxon>
        <taxon>Dikarya</taxon>
        <taxon>Ascomycota</taxon>
        <taxon>Saccharomycotina</taxon>
        <taxon>Saccharomycetes</taxon>
        <taxon>Saccharomycetales</taxon>
        <taxon>Saccharomycetaceae</taxon>
        <taxon>Saccharomyces</taxon>
    </lineage>
</organism>
<gene>
    <name type="primary">UBP9</name>
    <name type="ordered locus">YER098W</name>
</gene>